<organism>
    <name type="scientific">Nitrosomonas eutropha (strain DSM 101675 / C91 / Nm57)</name>
    <dbReference type="NCBI Taxonomy" id="335283"/>
    <lineage>
        <taxon>Bacteria</taxon>
        <taxon>Pseudomonadati</taxon>
        <taxon>Pseudomonadota</taxon>
        <taxon>Betaproteobacteria</taxon>
        <taxon>Nitrosomonadales</taxon>
        <taxon>Nitrosomonadaceae</taxon>
        <taxon>Nitrosomonas</taxon>
    </lineage>
</organism>
<dbReference type="EMBL" id="CP000450">
    <property type="protein sequence ID" value="ABI58831.1"/>
    <property type="molecule type" value="Genomic_DNA"/>
</dbReference>
<dbReference type="RefSeq" id="WP_011633673.1">
    <property type="nucleotide sequence ID" value="NC_008344.1"/>
</dbReference>
<dbReference type="SMR" id="Q0AIJ5"/>
<dbReference type="STRING" id="335283.Neut_0558"/>
<dbReference type="KEGG" id="net:Neut_0558"/>
<dbReference type="eggNOG" id="COG0087">
    <property type="taxonomic scope" value="Bacteria"/>
</dbReference>
<dbReference type="HOGENOM" id="CLU_044142_4_1_4"/>
<dbReference type="OrthoDB" id="9806135at2"/>
<dbReference type="Proteomes" id="UP000001966">
    <property type="component" value="Chromosome"/>
</dbReference>
<dbReference type="GO" id="GO:0022625">
    <property type="term" value="C:cytosolic large ribosomal subunit"/>
    <property type="evidence" value="ECO:0007669"/>
    <property type="project" value="TreeGrafter"/>
</dbReference>
<dbReference type="GO" id="GO:0019843">
    <property type="term" value="F:rRNA binding"/>
    <property type="evidence" value="ECO:0007669"/>
    <property type="project" value="UniProtKB-UniRule"/>
</dbReference>
<dbReference type="GO" id="GO:0003735">
    <property type="term" value="F:structural constituent of ribosome"/>
    <property type="evidence" value="ECO:0007669"/>
    <property type="project" value="InterPro"/>
</dbReference>
<dbReference type="GO" id="GO:0006412">
    <property type="term" value="P:translation"/>
    <property type="evidence" value="ECO:0007669"/>
    <property type="project" value="UniProtKB-UniRule"/>
</dbReference>
<dbReference type="FunFam" id="2.40.30.10:FF:000004">
    <property type="entry name" value="50S ribosomal protein L3"/>
    <property type="match status" value="1"/>
</dbReference>
<dbReference type="FunFam" id="3.30.160.810:FF:000001">
    <property type="entry name" value="50S ribosomal protein L3"/>
    <property type="match status" value="1"/>
</dbReference>
<dbReference type="Gene3D" id="3.30.160.810">
    <property type="match status" value="1"/>
</dbReference>
<dbReference type="Gene3D" id="2.40.30.10">
    <property type="entry name" value="Translation factors"/>
    <property type="match status" value="1"/>
</dbReference>
<dbReference type="HAMAP" id="MF_01325_B">
    <property type="entry name" value="Ribosomal_uL3_B"/>
    <property type="match status" value="1"/>
</dbReference>
<dbReference type="InterPro" id="IPR000597">
    <property type="entry name" value="Ribosomal_uL3"/>
</dbReference>
<dbReference type="InterPro" id="IPR019927">
    <property type="entry name" value="Ribosomal_uL3_bac/org-type"/>
</dbReference>
<dbReference type="InterPro" id="IPR019926">
    <property type="entry name" value="Ribosomal_uL3_CS"/>
</dbReference>
<dbReference type="InterPro" id="IPR009000">
    <property type="entry name" value="Transl_B-barrel_sf"/>
</dbReference>
<dbReference type="NCBIfam" id="TIGR03625">
    <property type="entry name" value="L3_bact"/>
    <property type="match status" value="1"/>
</dbReference>
<dbReference type="PANTHER" id="PTHR11229">
    <property type="entry name" value="50S RIBOSOMAL PROTEIN L3"/>
    <property type="match status" value="1"/>
</dbReference>
<dbReference type="PANTHER" id="PTHR11229:SF16">
    <property type="entry name" value="LARGE RIBOSOMAL SUBUNIT PROTEIN UL3C"/>
    <property type="match status" value="1"/>
</dbReference>
<dbReference type="Pfam" id="PF00297">
    <property type="entry name" value="Ribosomal_L3"/>
    <property type="match status" value="1"/>
</dbReference>
<dbReference type="SUPFAM" id="SSF50447">
    <property type="entry name" value="Translation proteins"/>
    <property type="match status" value="1"/>
</dbReference>
<dbReference type="PROSITE" id="PS00474">
    <property type="entry name" value="RIBOSOMAL_L3"/>
    <property type="match status" value="1"/>
</dbReference>
<reference key="1">
    <citation type="journal article" date="2007" name="Environ. Microbiol.">
        <title>Whole-genome analysis of the ammonia-oxidizing bacterium, Nitrosomonas eutropha C91: implications for niche adaptation.</title>
        <authorList>
            <person name="Stein L.Y."/>
            <person name="Arp D.J."/>
            <person name="Berube P.M."/>
            <person name="Chain P.S."/>
            <person name="Hauser L."/>
            <person name="Jetten M.S."/>
            <person name="Klotz M.G."/>
            <person name="Larimer F.W."/>
            <person name="Norton J.M."/>
            <person name="Op den Camp H.J.M."/>
            <person name="Shin M."/>
            <person name="Wei X."/>
        </authorList>
    </citation>
    <scope>NUCLEOTIDE SEQUENCE [LARGE SCALE GENOMIC DNA]</scope>
    <source>
        <strain>DSM 101675 / C91 / Nm57</strain>
    </source>
</reference>
<sequence>MKLGLIGKKVGMTRIFTESGSSVPVTVLDVSKNRVVQIKTAERDGYSAIQLTQGYRRKNRITKALSGHFARAGVEAGKVIKEFRIEQQAINSDLKLGSEINVEIFLTGSKVDVSGVSIGKGYAGTIKRHNFSSSRASHGNSRSHNVPGSIGMAQDPGRVFPGKKMTGRLGGVNSTIQNIEVVRVDTVRGLIFLKGSVPGSKGNGVFIRPSVKHANKQ</sequence>
<proteinExistence type="inferred from homology"/>
<comment type="function">
    <text evidence="1">One of the primary rRNA binding proteins, it binds directly near the 3'-end of the 23S rRNA, where it nucleates assembly of the 50S subunit.</text>
</comment>
<comment type="subunit">
    <text evidence="1">Part of the 50S ribosomal subunit. Forms a cluster with proteins L14 and L19.</text>
</comment>
<comment type="PTM">
    <text evidence="1">Methylated by PrmB.</text>
</comment>
<comment type="similarity">
    <text evidence="1">Belongs to the universal ribosomal protein uL3 family.</text>
</comment>
<feature type="chain" id="PRO_1000052096" description="Large ribosomal subunit protein uL3">
    <location>
        <begin position="1"/>
        <end position="217"/>
    </location>
</feature>
<feature type="region of interest" description="Disordered" evidence="2">
    <location>
        <begin position="131"/>
        <end position="155"/>
    </location>
</feature>
<feature type="compositionally biased region" description="Low complexity" evidence="2">
    <location>
        <begin position="132"/>
        <end position="145"/>
    </location>
</feature>
<feature type="modified residue" description="N5-methylglutamine" evidence="1">
    <location>
        <position position="154"/>
    </location>
</feature>
<evidence type="ECO:0000255" key="1">
    <source>
        <dbReference type="HAMAP-Rule" id="MF_01325"/>
    </source>
</evidence>
<evidence type="ECO:0000256" key="2">
    <source>
        <dbReference type="SAM" id="MobiDB-lite"/>
    </source>
</evidence>
<evidence type="ECO:0000305" key="3"/>
<name>RL3_NITEC</name>
<protein>
    <recommendedName>
        <fullName evidence="1">Large ribosomal subunit protein uL3</fullName>
    </recommendedName>
    <alternativeName>
        <fullName evidence="3">50S ribosomal protein L3</fullName>
    </alternativeName>
</protein>
<accession>Q0AIJ5</accession>
<gene>
    <name evidence="1" type="primary">rplC</name>
    <name type="ordered locus">Neut_0558</name>
</gene>
<keyword id="KW-0488">Methylation</keyword>
<keyword id="KW-0687">Ribonucleoprotein</keyword>
<keyword id="KW-0689">Ribosomal protein</keyword>
<keyword id="KW-0694">RNA-binding</keyword>
<keyword id="KW-0699">rRNA-binding</keyword>